<comment type="function">
    <text evidence="2">Monomeric heme protein which primary function is to store oxygen and facilitate its diffusion within muscle tissues. Reversibly binds oxygen through a pentacoordinated heme iron and enables its timely and efficient release as needed during periods of heightened demand. Depending on the oxidative conditions of tissues and cells, and in addition to its ability to bind oxygen, it also has a nitrite reductase activity whereby it regulates the production of bioactive nitric oxide. Under stress conditions, like hypoxia and anoxia, it also protects cells against reactive oxygen species thanks to its pseudoperoxidase activity.</text>
</comment>
<comment type="catalytic activity">
    <reaction evidence="2">
        <text>Fe(III)-heme b-[protein] + nitric oxide + H2O = Fe(II)-heme b-[protein] + nitrite + 2 H(+)</text>
        <dbReference type="Rhea" id="RHEA:77711"/>
        <dbReference type="Rhea" id="RHEA-COMP:18975"/>
        <dbReference type="Rhea" id="RHEA-COMP:18976"/>
        <dbReference type="ChEBI" id="CHEBI:15377"/>
        <dbReference type="ChEBI" id="CHEBI:15378"/>
        <dbReference type="ChEBI" id="CHEBI:16301"/>
        <dbReference type="ChEBI" id="CHEBI:16480"/>
        <dbReference type="ChEBI" id="CHEBI:55376"/>
        <dbReference type="ChEBI" id="CHEBI:60344"/>
    </reaction>
    <physiologicalReaction direction="right-to-left" evidence="2">
        <dbReference type="Rhea" id="RHEA:77713"/>
    </physiologicalReaction>
</comment>
<comment type="catalytic activity">
    <reaction evidence="2">
        <text>H2O2 + AH2 = A + 2 H2O</text>
        <dbReference type="Rhea" id="RHEA:30275"/>
        <dbReference type="ChEBI" id="CHEBI:13193"/>
        <dbReference type="ChEBI" id="CHEBI:15377"/>
        <dbReference type="ChEBI" id="CHEBI:16240"/>
        <dbReference type="ChEBI" id="CHEBI:17499"/>
    </reaction>
</comment>
<comment type="subunit">
    <text evidence="3">Monomeric.</text>
</comment>
<comment type="subcellular location">
    <subcellularLocation>
        <location evidence="2">Cytoplasm</location>
        <location evidence="2">Sarcoplasm</location>
    </subcellularLocation>
</comment>
<comment type="similarity">
    <text evidence="6">Belongs to the globin family.</text>
</comment>
<keyword id="KW-0963">Cytoplasm</keyword>
<keyword id="KW-0349">Heme</keyword>
<keyword id="KW-0408">Iron</keyword>
<keyword id="KW-0479">Metal-binding</keyword>
<keyword id="KW-0514">Muscle protein</keyword>
<keyword id="KW-0560">Oxidoreductase</keyword>
<keyword id="KW-0561">Oxygen transport</keyword>
<keyword id="KW-0813">Transport</keyword>
<evidence type="ECO:0000250" key="1"/>
<evidence type="ECO:0000250" key="2">
    <source>
        <dbReference type="UniProtKB" id="P02144"/>
    </source>
</evidence>
<evidence type="ECO:0000250" key="3">
    <source>
        <dbReference type="UniProtKB" id="P02185"/>
    </source>
</evidence>
<evidence type="ECO:0000250" key="4">
    <source>
        <dbReference type="UniProtKB" id="P02189"/>
    </source>
</evidence>
<evidence type="ECO:0000250" key="5">
    <source>
        <dbReference type="UniProtKB" id="P68082"/>
    </source>
</evidence>
<evidence type="ECO:0000255" key="6">
    <source>
        <dbReference type="PROSITE-ProRule" id="PRU00238"/>
    </source>
</evidence>
<name>MYG_KATPE</name>
<gene>
    <name type="primary">mb</name>
</gene>
<protein>
    <recommendedName>
        <fullName>Myoglobin</fullName>
    </recommendedName>
    <alternativeName>
        <fullName evidence="2">Nitrite reductase MB</fullName>
        <ecNumber evidence="2">1.7.-.-</ecNumber>
    </alternativeName>
    <alternativeName>
        <fullName evidence="2">Pseudoperoxidase MB</fullName>
        <ecNumber evidence="2">1.11.1.-</ecNumber>
    </alternativeName>
</protein>
<proteinExistence type="evidence at transcript level"/>
<accession>Q9DGI8</accession>
<organism>
    <name type="scientific">Katsuwonus pelamis</name>
    <name type="common">Skipjack tuna</name>
    <name type="synonym">Scomber pelamis</name>
    <dbReference type="NCBI Taxonomy" id="8226"/>
    <lineage>
        <taxon>Eukaryota</taxon>
        <taxon>Metazoa</taxon>
        <taxon>Chordata</taxon>
        <taxon>Craniata</taxon>
        <taxon>Vertebrata</taxon>
        <taxon>Euteleostomi</taxon>
        <taxon>Actinopterygii</taxon>
        <taxon>Neopterygii</taxon>
        <taxon>Teleostei</taxon>
        <taxon>Neoteleostei</taxon>
        <taxon>Acanthomorphata</taxon>
        <taxon>Pelagiaria</taxon>
        <taxon>Scombriformes</taxon>
        <taxon>Scombridae</taxon>
        <taxon>Katsuwonus</taxon>
    </lineage>
</organism>
<sequence length="146" mass="15396">MADLDAVLKCWGAVEADFNTVGGLVLARLFKDHPETQKLFPKFAGITGDIAGNAAVAAHGATVLKKLGELLKAKGNHAAIIKPLANSHAKQHKIPINNFKLITEALAHVLHEKAGLDAAGQTALRNVMGIVIADLEANYKELGFTG</sequence>
<dbReference type="EC" id="1.7.-.-" evidence="2"/>
<dbReference type="EC" id="1.11.1.-" evidence="2"/>
<dbReference type="EMBL" id="AF291837">
    <property type="protein sequence ID" value="AAG02111.1"/>
    <property type="molecule type" value="mRNA"/>
</dbReference>
<dbReference type="SMR" id="Q9DGI8"/>
<dbReference type="GO" id="GO:0070062">
    <property type="term" value="C:extracellular exosome"/>
    <property type="evidence" value="ECO:0007669"/>
    <property type="project" value="TreeGrafter"/>
</dbReference>
<dbReference type="GO" id="GO:0016528">
    <property type="term" value="C:sarcoplasm"/>
    <property type="evidence" value="ECO:0000250"/>
    <property type="project" value="UniProtKB"/>
</dbReference>
<dbReference type="GO" id="GO:0020037">
    <property type="term" value="F:heme binding"/>
    <property type="evidence" value="ECO:0007669"/>
    <property type="project" value="InterPro"/>
</dbReference>
<dbReference type="GO" id="GO:0046872">
    <property type="term" value="F:metal ion binding"/>
    <property type="evidence" value="ECO:0007669"/>
    <property type="project" value="UniProtKB-KW"/>
</dbReference>
<dbReference type="GO" id="GO:0098809">
    <property type="term" value="F:nitrite reductase activity"/>
    <property type="evidence" value="ECO:0000250"/>
    <property type="project" value="UniProtKB"/>
</dbReference>
<dbReference type="GO" id="GO:0019825">
    <property type="term" value="F:oxygen binding"/>
    <property type="evidence" value="ECO:0007669"/>
    <property type="project" value="InterPro"/>
</dbReference>
<dbReference type="GO" id="GO:0005344">
    <property type="term" value="F:oxygen carrier activity"/>
    <property type="evidence" value="ECO:0000250"/>
    <property type="project" value="UniProtKB"/>
</dbReference>
<dbReference type="GO" id="GO:0004601">
    <property type="term" value="F:peroxidase activity"/>
    <property type="evidence" value="ECO:0000250"/>
    <property type="project" value="UniProtKB"/>
</dbReference>
<dbReference type="GO" id="GO:0019430">
    <property type="term" value="P:removal of superoxide radicals"/>
    <property type="evidence" value="ECO:0000250"/>
    <property type="project" value="UniProtKB"/>
</dbReference>
<dbReference type="Gene3D" id="6.10.140.2100">
    <property type="match status" value="1"/>
</dbReference>
<dbReference type="Gene3D" id="6.10.140.2110">
    <property type="match status" value="1"/>
</dbReference>
<dbReference type="InterPro" id="IPR000971">
    <property type="entry name" value="Globin"/>
</dbReference>
<dbReference type="InterPro" id="IPR009050">
    <property type="entry name" value="Globin-like_sf"/>
</dbReference>
<dbReference type="InterPro" id="IPR002335">
    <property type="entry name" value="Myoglobin"/>
</dbReference>
<dbReference type="PANTHER" id="PTHR47132">
    <property type="entry name" value="MYOGLOBIN"/>
    <property type="match status" value="1"/>
</dbReference>
<dbReference type="PANTHER" id="PTHR47132:SF1">
    <property type="entry name" value="MYOGLOBIN"/>
    <property type="match status" value="1"/>
</dbReference>
<dbReference type="Pfam" id="PF00042">
    <property type="entry name" value="Globin"/>
    <property type="match status" value="1"/>
</dbReference>
<dbReference type="PRINTS" id="PR00613">
    <property type="entry name" value="MYOGLOBIN"/>
</dbReference>
<dbReference type="SUPFAM" id="SSF46458">
    <property type="entry name" value="Globin-like"/>
    <property type="match status" value="1"/>
</dbReference>
<dbReference type="PROSITE" id="PS01033">
    <property type="entry name" value="GLOBIN"/>
    <property type="match status" value="1"/>
</dbReference>
<reference key="1">
    <citation type="journal article" date="2001" name="Am. J. Physiol.">
        <title>Oxygen affinity and amino acid sequence of myoglobins from endothermic and ectothermic fish.</title>
        <authorList>
            <person name="Marcinek D.J."/>
            <person name="Bonaventura J."/>
            <person name="Wittenberg J.B."/>
            <person name="Block B.A."/>
        </authorList>
    </citation>
    <scope>NUCLEOTIDE SEQUENCE [MRNA]</scope>
    <source>
        <tissue>Skeletal muscle</tissue>
    </source>
</reference>
<feature type="initiator methionine" description="Removed" evidence="1">
    <location>
        <position position="1"/>
    </location>
</feature>
<feature type="chain" id="PRO_0000053366" description="Myoglobin">
    <location>
        <begin position="2"/>
        <end position="146"/>
    </location>
</feature>
<feature type="domain" description="Globin" evidence="6">
    <location>
        <begin position="2"/>
        <end position="140"/>
    </location>
</feature>
<feature type="binding site" evidence="5">
    <location>
        <position position="59"/>
    </location>
    <ligand>
        <name>nitrite</name>
        <dbReference type="ChEBI" id="CHEBI:16301"/>
    </ligand>
</feature>
<feature type="binding site" evidence="4 6">
    <location>
        <position position="59"/>
    </location>
    <ligand>
        <name>O2</name>
        <dbReference type="ChEBI" id="CHEBI:15379"/>
    </ligand>
</feature>
<feature type="binding site" description="proximal binding residue" evidence="2">
    <location>
        <position position="88"/>
    </location>
    <ligand>
        <name>heme b</name>
        <dbReference type="ChEBI" id="CHEBI:60344"/>
    </ligand>
    <ligandPart>
        <name>Fe</name>
        <dbReference type="ChEBI" id="CHEBI:18248"/>
    </ligandPart>
</feature>